<evidence type="ECO:0000250" key="1"/>
<evidence type="ECO:0000255" key="2"/>
<evidence type="ECO:0000305" key="3"/>
<gene>
    <name type="primary">BBXB11</name>
</gene>
<proteinExistence type="inferred from homology"/>
<organism>
    <name type="scientific">Bombyx mori</name>
    <name type="common">Silk moth</name>
    <dbReference type="NCBI Taxonomy" id="7091"/>
    <lineage>
        <taxon>Eukaryota</taxon>
        <taxon>Metazoa</taxon>
        <taxon>Ecdysozoa</taxon>
        <taxon>Arthropoda</taxon>
        <taxon>Hexapoda</taxon>
        <taxon>Insecta</taxon>
        <taxon>Pterygota</taxon>
        <taxon>Neoptera</taxon>
        <taxon>Endopterygota</taxon>
        <taxon>Lepidoptera</taxon>
        <taxon>Glossata</taxon>
        <taxon>Ditrysia</taxon>
        <taxon>Bombycoidea</taxon>
        <taxon>Bombycidae</taxon>
        <taxon>Bombycinae</taxon>
        <taxon>Bombyx</taxon>
    </lineage>
</organism>
<keyword id="KW-0165">Cleavage on pair of basic residues</keyword>
<keyword id="KW-1015">Disulfide bond</keyword>
<keyword id="KW-0372">Hormone</keyword>
<keyword id="KW-1185">Reference proteome</keyword>
<keyword id="KW-0964">Secreted</keyword>
<keyword id="KW-0732">Signal</keyword>
<sequence>MMKTAVMFILVVVISLTYSSEEQEVARTYCGRHLANILAYVCFGVEKRGGAQYAPYWQETYLRSRKGPGVVDECCFRPCKLEVLKSFFFFFCD</sequence>
<name>BXB11_BOMMO</name>
<feature type="signal peptide" evidence="2">
    <location>
        <begin position="1"/>
        <end position="22"/>
    </location>
</feature>
<feature type="peptide" id="PRO_0000016019" description="Bombyxin B-11 B chain">
    <location>
        <begin position="23"/>
        <end position="46"/>
    </location>
</feature>
<feature type="propeptide" id="PRO_0000016020" description="Bombyxin B-11 C peptide">
    <location>
        <begin position="49"/>
        <end position="64"/>
    </location>
</feature>
<feature type="peptide" id="PRO_0000016021" description="Bombyxin B-11 A chain">
    <location>
        <begin position="67"/>
        <end position="93"/>
    </location>
</feature>
<feature type="disulfide bond" description="Interchain (between B and A chains)" evidence="1">
    <location>
        <begin position="30"/>
        <end position="75"/>
    </location>
</feature>
<feature type="disulfide bond" description="Interchain (between B and A chains)" evidence="1">
    <location>
        <begin position="42"/>
        <end position="92"/>
    </location>
</feature>
<feature type="disulfide bond" evidence="1">
    <location>
        <begin position="74"/>
        <end position="79"/>
    </location>
</feature>
<accession>Q17196</accession>
<comment type="function">
    <text>Brain peptide responsible for activation of prothoracic glands to produce ecdysone in insects.</text>
</comment>
<comment type="subunit">
    <text>Heterodimer of a B chain and an A chain linked by two disulfide bonds.</text>
</comment>
<comment type="subcellular location">
    <subcellularLocation>
        <location>Secreted</location>
    </subcellularLocation>
</comment>
<comment type="miscellaneous">
    <text>Silk worm has two kinds of PTTH: 4K-PTTH and 22K-PTTH; there are many forms of 4K-PTTH.</text>
</comment>
<comment type="similarity">
    <text evidence="3">Belongs to the insulin family.</text>
</comment>
<dbReference type="EMBL" id="D00788">
    <property type="protein sequence ID" value="BAA00684.1"/>
    <property type="molecule type" value="Genomic_DNA"/>
</dbReference>
<dbReference type="PIR" id="S69496">
    <property type="entry name" value="S69496"/>
</dbReference>
<dbReference type="RefSeq" id="NP_001121606.1">
    <property type="nucleotide sequence ID" value="NM_001128134.1"/>
</dbReference>
<dbReference type="EnsemblMetazoa" id="NM_001128134.1">
    <property type="protein sequence ID" value="NP_001121606.1"/>
    <property type="gene ID" value="GeneID_100169656"/>
</dbReference>
<dbReference type="GeneID" id="100169656"/>
<dbReference type="KEGG" id="bmor:100169656"/>
<dbReference type="CTD" id="100169656"/>
<dbReference type="InParanoid" id="Q17196"/>
<dbReference type="OrthoDB" id="493443at7088"/>
<dbReference type="Proteomes" id="UP000005204">
    <property type="component" value="Unassembled WGS sequence"/>
</dbReference>
<dbReference type="GO" id="GO:0005615">
    <property type="term" value="C:extracellular space"/>
    <property type="evidence" value="ECO:0007669"/>
    <property type="project" value="InterPro"/>
</dbReference>
<dbReference type="GO" id="GO:0008083">
    <property type="term" value="F:growth factor activity"/>
    <property type="evidence" value="ECO:0007669"/>
    <property type="project" value="InterPro"/>
</dbReference>
<dbReference type="GO" id="GO:0005179">
    <property type="term" value="F:hormone activity"/>
    <property type="evidence" value="ECO:0007669"/>
    <property type="project" value="UniProtKB-KW"/>
</dbReference>
<dbReference type="GO" id="GO:0005159">
    <property type="term" value="F:insulin-like growth factor receptor binding"/>
    <property type="evidence" value="ECO:0007669"/>
    <property type="project" value="TreeGrafter"/>
</dbReference>
<dbReference type="GO" id="GO:0008283">
    <property type="term" value="P:cell population proliferation"/>
    <property type="evidence" value="ECO:0007669"/>
    <property type="project" value="TreeGrafter"/>
</dbReference>
<dbReference type="GO" id="GO:0048009">
    <property type="term" value="P:insulin-like growth factor receptor signaling pathway"/>
    <property type="evidence" value="ECO:0007669"/>
    <property type="project" value="TreeGrafter"/>
</dbReference>
<dbReference type="GO" id="GO:0043066">
    <property type="term" value="P:negative regulation of apoptotic process"/>
    <property type="evidence" value="ECO:0007669"/>
    <property type="project" value="TreeGrafter"/>
</dbReference>
<dbReference type="GO" id="GO:0008284">
    <property type="term" value="P:positive regulation of cell population proliferation"/>
    <property type="evidence" value="ECO:0007669"/>
    <property type="project" value="TreeGrafter"/>
</dbReference>
<dbReference type="GO" id="GO:0051897">
    <property type="term" value="P:positive regulation of phosphatidylinositol 3-kinase/protein kinase B signal transduction"/>
    <property type="evidence" value="ECO:0007669"/>
    <property type="project" value="TreeGrafter"/>
</dbReference>
<dbReference type="CDD" id="cd04366">
    <property type="entry name" value="IlGF_insulin_bombyxin_like"/>
    <property type="match status" value="1"/>
</dbReference>
<dbReference type="Gene3D" id="1.10.100.10">
    <property type="entry name" value="Insulin-like"/>
    <property type="match status" value="1"/>
</dbReference>
<dbReference type="InterPro" id="IPR017097">
    <property type="entry name" value="Bombyxin"/>
</dbReference>
<dbReference type="InterPro" id="IPR027285">
    <property type="entry name" value="Bombyxin_B"/>
</dbReference>
<dbReference type="InterPro" id="IPR016179">
    <property type="entry name" value="Insulin-like"/>
</dbReference>
<dbReference type="InterPro" id="IPR036438">
    <property type="entry name" value="Insulin-like_sf"/>
</dbReference>
<dbReference type="InterPro" id="IPR022352">
    <property type="entry name" value="Insulin_family"/>
</dbReference>
<dbReference type="PANTHER" id="PTHR46845">
    <property type="entry name" value="INSULIN-LIKE GROWTH FACTOR I"/>
    <property type="match status" value="1"/>
</dbReference>
<dbReference type="PANTHER" id="PTHR46845:SF1">
    <property type="entry name" value="INSULIN-LIKE GROWTH FACTOR I"/>
    <property type="match status" value="1"/>
</dbReference>
<dbReference type="Pfam" id="PF00049">
    <property type="entry name" value="Insulin"/>
    <property type="match status" value="2"/>
</dbReference>
<dbReference type="PIRSF" id="PIRSF037038">
    <property type="entry name" value="Bombyxin"/>
    <property type="match status" value="1"/>
</dbReference>
<dbReference type="PIRSF" id="PIRSF500313">
    <property type="entry name" value="Bombyxin_B"/>
    <property type="match status" value="1"/>
</dbReference>
<dbReference type="PRINTS" id="PR02003">
    <property type="entry name" value="BOMBYXIN"/>
</dbReference>
<dbReference type="PRINTS" id="PR00276">
    <property type="entry name" value="INSULINFAMLY"/>
</dbReference>
<dbReference type="SMART" id="SM00078">
    <property type="entry name" value="IlGF"/>
    <property type="match status" value="1"/>
</dbReference>
<dbReference type="SUPFAM" id="SSF56994">
    <property type="entry name" value="Insulin-like"/>
    <property type="match status" value="1"/>
</dbReference>
<protein>
    <recommendedName>
        <fullName>Bombyxin B-11</fullName>
        <shortName>BBX-B11</shortName>
    </recommendedName>
    <alternativeName>
        <fullName>4K-prothoracicotropic hormone</fullName>
        <shortName>4K-PTTH</shortName>
    </alternativeName>
    <component>
        <recommendedName>
            <fullName>Bombyxin B-11 B chain</fullName>
        </recommendedName>
    </component>
    <component>
        <recommendedName>
            <fullName>Bombyxin B-11 A chain</fullName>
        </recommendedName>
    </component>
</protein>
<reference key="1">
    <citation type="journal article" date="1996" name="J. Mol. Biol.">
        <title>Multiple gene copies for bombyxin, an insulin-related peptide of the silkmoth Bombyx mori: structural signs for gene rearrangement and duplication responsible for generation of multiple molecular forms of bombyxin.</title>
        <authorList>
            <person name="Kondo H."/>
            <person name="Ino M."/>
            <person name="Suzuki A."/>
            <person name="Ishizaki H."/>
            <person name="Iwami M."/>
        </authorList>
    </citation>
    <scope>NUCLEOTIDE SEQUENCE [GENOMIC DNA]</scope>
    <source>
        <strain>Showa</strain>
    </source>
</reference>